<comment type="function">
    <text evidence="1">Binds to actin and affects the structure of the cytoskeleton. At high concentrations, profilin prevents the polymerization of actin, whereas it enhances it at low concentrations.</text>
</comment>
<comment type="subunit">
    <text evidence="1">Occurs in many kinds of cells as a complex with monomeric actin in a 1:1 ratio.</text>
</comment>
<comment type="subcellular location">
    <subcellularLocation>
        <location evidence="1">Cytoplasm</location>
        <location evidence="1">Cytoskeleton</location>
    </subcellularLocation>
</comment>
<comment type="allergen">
    <text evidence="2">Causes an allergic reaction in human. Binds to IgE.</text>
</comment>
<comment type="similarity">
    <text evidence="4">Belongs to the profilin family.</text>
</comment>
<protein>
    <recommendedName>
        <fullName evidence="3">Profilin</fullName>
    </recommendedName>
    <allergenName evidence="3">Pla l 2</allergenName>
</protein>
<keyword id="KW-0009">Actin-binding</keyword>
<keyword id="KW-0020">Allergen</keyword>
<keyword id="KW-0963">Cytoplasm</keyword>
<keyword id="KW-0206">Cytoskeleton</keyword>
<keyword id="KW-0903">Direct protein sequencing</keyword>
<organism evidence="3">
    <name type="scientific">Plantago lanceolata</name>
    <name type="common">English plantain</name>
    <name type="synonym">Ribwort plantain</name>
    <dbReference type="NCBI Taxonomy" id="39414"/>
    <lineage>
        <taxon>Eukaryota</taxon>
        <taxon>Viridiplantae</taxon>
        <taxon>Streptophyta</taxon>
        <taxon>Embryophyta</taxon>
        <taxon>Tracheophyta</taxon>
        <taxon>Spermatophyta</taxon>
        <taxon>Magnoliopsida</taxon>
        <taxon>eudicotyledons</taxon>
        <taxon>Gunneridae</taxon>
        <taxon>Pentapetalae</taxon>
        <taxon>asterids</taxon>
        <taxon>lamiids</taxon>
        <taxon>Lamiales</taxon>
        <taxon>Plantaginaceae</taxon>
        <taxon>Plantagineae</taxon>
        <taxon>Plantago</taxon>
    </lineage>
</organism>
<proteinExistence type="evidence at protein level"/>
<reference evidence="4" key="1">
    <citation type="journal article" date="2017" name="Mol. Immunol.">
        <title>Purification and immunochemical characterization of Pla l 2, the profilin from Plantago lanceolata.</title>
        <authorList>
            <person name="Moya R."/>
            <person name="Rubio V."/>
            <person name="Beitia J.M."/>
            <person name="Carnes J."/>
            <person name="Lopez-Matas M.A."/>
        </authorList>
    </citation>
    <scope>PROTEIN SEQUENCE</scope>
    <scope>ALLERGEN</scope>
    <scope>IDENTIFICATION BY MASS SPECTROMETRY</scope>
    <source>
        <tissue evidence="3">Pollen</tissue>
    </source>
</reference>
<name>PROF_PLALA</name>
<evidence type="ECO:0000250" key="1">
    <source>
        <dbReference type="UniProtKB" id="P35081"/>
    </source>
</evidence>
<evidence type="ECO:0000269" key="2">
    <source>
    </source>
</evidence>
<evidence type="ECO:0000303" key="3">
    <source>
    </source>
</evidence>
<evidence type="ECO:0000305" key="4"/>
<feature type="chain" id="PRO_0000439276" description="Profilin">
    <location>
        <begin position="1" status="less than"/>
        <end position="42" status="greater than"/>
    </location>
</feature>
<feature type="unsure residue" description="I or L" evidence="2">
    <location>
        <position position="2"/>
    </location>
</feature>
<feature type="unsure residue" description="L or I" evidence="2">
    <location>
        <position position="3"/>
    </location>
</feature>
<feature type="unsure residue" description="L or I" evidence="2">
    <location>
        <position position="14"/>
    </location>
</feature>
<feature type="unsure residue" description="L or I" evidence="2">
    <location>
        <position position="16"/>
    </location>
</feature>
<feature type="unsure residue" description="I or L" evidence="2">
    <location>
        <position position="23"/>
    </location>
</feature>
<feature type="unsure residue" description="I or L" evidence="2">
    <location>
        <position position="31"/>
    </location>
</feature>
<feature type="unsure residue" description="L or I" evidence="2">
    <location>
        <position position="33"/>
    </location>
</feature>
<feature type="unsure residue" description="L or I" evidence="2">
    <location>
        <position position="37"/>
    </location>
</feature>
<feature type="unsure residue" description="L or I" evidence="2">
    <location>
        <position position="38"/>
    </location>
</feature>
<feature type="unsure residue" description="L or I" evidence="2">
    <location>
        <position position="42"/>
    </location>
</feature>
<feature type="non-consecutive residues" evidence="3">
    <location>
        <begin position="12"/>
        <end position="13"/>
    </location>
</feature>
<feature type="non-consecutive residues" evidence="3">
    <location>
        <begin position="21"/>
        <end position="22"/>
    </location>
</feature>
<feature type="non-consecutive residues" evidence="3">
    <location>
        <begin position="32"/>
        <end position="33"/>
    </location>
</feature>
<feature type="non-terminal residue" evidence="3">
    <location>
        <position position="1"/>
    </location>
</feature>
<feature type="non-terminal residue" evidence="3">
    <location>
        <position position="42"/>
    </location>
</feature>
<accession>C0HJX6</accession>
<dbReference type="Allergome" id="11840">
    <property type="allergen name" value="Pla l 2"/>
</dbReference>
<dbReference type="Allergome" id="11915">
    <property type="allergen name" value="Pla l 2.0101"/>
</dbReference>
<dbReference type="GO" id="GO:0005737">
    <property type="term" value="C:cytoplasm"/>
    <property type="evidence" value="ECO:0007669"/>
    <property type="project" value="UniProtKB-KW"/>
</dbReference>
<dbReference type="GO" id="GO:0005856">
    <property type="term" value="C:cytoskeleton"/>
    <property type="evidence" value="ECO:0007669"/>
    <property type="project" value="UniProtKB-SubCell"/>
</dbReference>
<dbReference type="GO" id="GO:0003779">
    <property type="term" value="F:actin binding"/>
    <property type="evidence" value="ECO:0007669"/>
    <property type="project" value="UniProtKB-KW"/>
</dbReference>
<sequence>AILGQDGSVWAQGLHLGGAKYVIAGEPGAVIRLGDYLLDQGL</sequence>